<accession>Q0AB94</accession>
<name>SYP_ALKEH</name>
<feature type="chain" id="PRO_0000288308" description="Proline--tRNA ligase">
    <location>
        <begin position="1"/>
        <end position="568"/>
    </location>
</feature>
<evidence type="ECO:0000255" key="1">
    <source>
        <dbReference type="HAMAP-Rule" id="MF_01569"/>
    </source>
</evidence>
<protein>
    <recommendedName>
        <fullName evidence="1">Proline--tRNA ligase</fullName>
        <ecNumber evidence="1">6.1.1.15</ecNumber>
    </recommendedName>
    <alternativeName>
        <fullName evidence="1">Prolyl-tRNA synthetase</fullName>
        <shortName evidence="1">ProRS</shortName>
    </alternativeName>
</protein>
<sequence length="568" mass="62591">MRASLFPLSTSKETPADAEIVSHQLMLRAGMIRKLAAGLYTWTPLGLRVLRKVEQIVREEMDRAGAHELLMPAVQPAELWQESTRWDKYGPELLRLKDRHERDFCFGPTHEEVITDYVRREVKSYRQLPLNLYQIQTKFRDEIRPRFGVMRAREFLMKDAYSFHLDDDCLARTYQVMYETYTRIFERTGLVFRAVAADSGNIGGSVSHEFHVLAESGEDAVAFSDESDYAANVELAEAVAPAGEAPPPAETMRRVDTPGARTIDDLVRDYGLPIEKTVKTLVVHGADGGLVALLVRGDHSLNDVKATTLPQVAEPLVMAGEEEIRAAVGAGPGSLGPVELPLPCVVDRSVAVMSDFAAGANQDDAHYFGINWGRDVALPEVADLREVVAGDPSPDGRGTLEIARGIEVGHIFQLGREYSEKMKATVLNEAGDAQTVTMGCYGIGVSRVVAAAIEQNHDDNGIIWPAPIAPFQLALVPIGMNRSEAVTEQAEKLYAELQAEGVEVFFDDRDARPGVKFADMELIGIPHRLVIGDRGLKNGVVEYRGRRDSESTDVPLAELSAFLRERLG</sequence>
<keyword id="KW-0030">Aminoacyl-tRNA synthetase</keyword>
<keyword id="KW-0067">ATP-binding</keyword>
<keyword id="KW-0963">Cytoplasm</keyword>
<keyword id="KW-0436">Ligase</keyword>
<keyword id="KW-0547">Nucleotide-binding</keyword>
<keyword id="KW-0648">Protein biosynthesis</keyword>
<keyword id="KW-1185">Reference proteome</keyword>
<comment type="function">
    <text evidence="1">Catalyzes the attachment of proline to tRNA(Pro) in a two-step reaction: proline is first activated by ATP to form Pro-AMP and then transferred to the acceptor end of tRNA(Pro). As ProRS can inadvertently accommodate and process non-cognate amino acids such as alanine and cysteine, to avoid such errors it has two additional distinct editing activities against alanine. One activity is designated as 'pretransfer' editing and involves the tRNA(Pro)-independent hydrolysis of activated Ala-AMP. The other activity is designated 'posttransfer' editing and involves deacylation of mischarged Ala-tRNA(Pro). The misacylated Cys-tRNA(Pro) is not edited by ProRS.</text>
</comment>
<comment type="catalytic activity">
    <reaction evidence="1">
        <text>tRNA(Pro) + L-proline + ATP = L-prolyl-tRNA(Pro) + AMP + diphosphate</text>
        <dbReference type="Rhea" id="RHEA:14305"/>
        <dbReference type="Rhea" id="RHEA-COMP:9700"/>
        <dbReference type="Rhea" id="RHEA-COMP:9702"/>
        <dbReference type="ChEBI" id="CHEBI:30616"/>
        <dbReference type="ChEBI" id="CHEBI:33019"/>
        <dbReference type="ChEBI" id="CHEBI:60039"/>
        <dbReference type="ChEBI" id="CHEBI:78442"/>
        <dbReference type="ChEBI" id="CHEBI:78532"/>
        <dbReference type="ChEBI" id="CHEBI:456215"/>
        <dbReference type="EC" id="6.1.1.15"/>
    </reaction>
</comment>
<comment type="subunit">
    <text evidence="1">Homodimer.</text>
</comment>
<comment type="subcellular location">
    <subcellularLocation>
        <location evidence="1">Cytoplasm</location>
    </subcellularLocation>
</comment>
<comment type="domain">
    <text evidence="1">Consists of three domains: the N-terminal catalytic domain, the editing domain and the C-terminal anticodon-binding domain.</text>
</comment>
<comment type="similarity">
    <text evidence="1">Belongs to the class-II aminoacyl-tRNA synthetase family. ProS type 1 subfamily.</text>
</comment>
<proteinExistence type="inferred from homology"/>
<organism>
    <name type="scientific">Alkalilimnicola ehrlichii (strain ATCC BAA-1101 / DSM 17681 / MLHE-1)</name>
    <dbReference type="NCBI Taxonomy" id="187272"/>
    <lineage>
        <taxon>Bacteria</taxon>
        <taxon>Pseudomonadati</taxon>
        <taxon>Pseudomonadota</taxon>
        <taxon>Gammaproteobacteria</taxon>
        <taxon>Chromatiales</taxon>
        <taxon>Ectothiorhodospiraceae</taxon>
        <taxon>Alkalilimnicola</taxon>
    </lineage>
</organism>
<reference key="1">
    <citation type="submission" date="2006-08" db="EMBL/GenBank/DDBJ databases">
        <title>Complete sequence of Alkalilimnicola ehrilichei MLHE-1.</title>
        <authorList>
            <person name="Copeland A."/>
            <person name="Lucas S."/>
            <person name="Lapidus A."/>
            <person name="Barry K."/>
            <person name="Detter J.C."/>
            <person name="Glavina del Rio T."/>
            <person name="Hammon N."/>
            <person name="Israni S."/>
            <person name="Dalin E."/>
            <person name="Tice H."/>
            <person name="Pitluck S."/>
            <person name="Sims D."/>
            <person name="Brettin T."/>
            <person name="Bruce D."/>
            <person name="Han C."/>
            <person name="Tapia R."/>
            <person name="Gilna P."/>
            <person name="Schmutz J."/>
            <person name="Larimer F."/>
            <person name="Land M."/>
            <person name="Hauser L."/>
            <person name="Kyrpides N."/>
            <person name="Mikhailova N."/>
            <person name="Oremland R.S."/>
            <person name="Hoeft S.E."/>
            <person name="Switzer-Blum J."/>
            <person name="Kulp T."/>
            <person name="King G."/>
            <person name="Tabita R."/>
            <person name="Witte B."/>
            <person name="Santini J.M."/>
            <person name="Basu P."/>
            <person name="Hollibaugh J.T."/>
            <person name="Xie G."/>
            <person name="Stolz J.F."/>
            <person name="Richardson P."/>
        </authorList>
    </citation>
    <scope>NUCLEOTIDE SEQUENCE [LARGE SCALE GENOMIC DNA]</scope>
    <source>
        <strain>ATCC BAA-1101 / DSM 17681 / MLHE-1</strain>
    </source>
</reference>
<dbReference type="EC" id="6.1.1.15" evidence="1"/>
<dbReference type="EMBL" id="CP000453">
    <property type="protein sequence ID" value="ABI55893.1"/>
    <property type="molecule type" value="Genomic_DNA"/>
</dbReference>
<dbReference type="RefSeq" id="WP_011628288.1">
    <property type="nucleotide sequence ID" value="NC_008340.1"/>
</dbReference>
<dbReference type="SMR" id="Q0AB94"/>
<dbReference type="KEGG" id="aeh:Mlg_0539"/>
<dbReference type="eggNOG" id="COG0442">
    <property type="taxonomic scope" value="Bacteria"/>
</dbReference>
<dbReference type="HOGENOM" id="CLU_016739_0_0_6"/>
<dbReference type="OrthoDB" id="9809052at2"/>
<dbReference type="Proteomes" id="UP000001962">
    <property type="component" value="Chromosome"/>
</dbReference>
<dbReference type="GO" id="GO:0005829">
    <property type="term" value="C:cytosol"/>
    <property type="evidence" value="ECO:0007669"/>
    <property type="project" value="TreeGrafter"/>
</dbReference>
<dbReference type="GO" id="GO:0002161">
    <property type="term" value="F:aminoacyl-tRNA deacylase activity"/>
    <property type="evidence" value="ECO:0007669"/>
    <property type="project" value="InterPro"/>
</dbReference>
<dbReference type="GO" id="GO:0005524">
    <property type="term" value="F:ATP binding"/>
    <property type="evidence" value="ECO:0007669"/>
    <property type="project" value="UniProtKB-UniRule"/>
</dbReference>
<dbReference type="GO" id="GO:0004827">
    <property type="term" value="F:proline-tRNA ligase activity"/>
    <property type="evidence" value="ECO:0007669"/>
    <property type="project" value="UniProtKB-UniRule"/>
</dbReference>
<dbReference type="GO" id="GO:0006433">
    <property type="term" value="P:prolyl-tRNA aminoacylation"/>
    <property type="evidence" value="ECO:0007669"/>
    <property type="project" value="UniProtKB-UniRule"/>
</dbReference>
<dbReference type="CDD" id="cd04334">
    <property type="entry name" value="ProRS-INS"/>
    <property type="match status" value="1"/>
</dbReference>
<dbReference type="CDD" id="cd00861">
    <property type="entry name" value="ProRS_anticodon_short"/>
    <property type="match status" value="1"/>
</dbReference>
<dbReference type="CDD" id="cd00779">
    <property type="entry name" value="ProRS_core_prok"/>
    <property type="match status" value="1"/>
</dbReference>
<dbReference type="FunFam" id="3.30.930.10:FF:000043">
    <property type="entry name" value="Proline--tRNA ligase"/>
    <property type="match status" value="1"/>
</dbReference>
<dbReference type="FunFam" id="3.30.930.10:FF:000097">
    <property type="entry name" value="Proline--tRNA ligase"/>
    <property type="match status" value="1"/>
</dbReference>
<dbReference type="FunFam" id="3.90.960.10:FF:000001">
    <property type="entry name" value="Proline--tRNA ligase"/>
    <property type="match status" value="1"/>
</dbReference>
<dbReference type="Gene3D" id="3.40.50.800">
    <property type="entry name" value="Anticodon-binding domain"/>
    <property type="match status" value="1"/>
</dbReference>
<dbReference type="Gene3D" id="3.30.930.10">
    <property type="entry name" value="Bira Bifunctional Protein, Domain 2"/>
    <property type="match status" value="2"/>
</dbReference>
<dbReference type="Gene3D" id="3.90.960.10">
    <property type="entry name" value="YbaK/aminoacyl-tRNA synthetase-associated domain"/>
    <property type="match status" value="1"/>
</dbReference>
<dbReference type="HAMAP" id="MF_01569">
    <property type="entry name" value="Pro_tRNA_synth_type1"/>
    <property type="match status" value="1"/>
</dbReference>
<dbReference type="InterPro" id="IPR002314">
    <property type="entry name" value="aa-tRNA-synt_IIb"/>
</dbReference>
<dbReference type="InterPro" id="IPR006195">
    <property type="entry name" value="aa-tRNA-synth_II"/>
</dbReference>
<dbReference type="InterPro" id="IPR045864">
    <property type="entry name" value="aa-tRNA-synth_II/BPL/LPL"/>
</dbReference>
<dbReference type="InterPro" id="IPR004154">
    <property type="entry name" value="Anticodon-bd"/>
</dbReference>
<dbReference type="InterPro" id="IPR036621">
    <property type="entry name" value="Anticodon-bd_dom_sf"/>
</dbReference>
<dbReference type="InterPro" id="IPR002316">
    <property type="entry name" value="Pro-tRNA-ligase_IIa"/>
</dbReference>
<dbReference type="InterPro" id="IPR004500">
    <property type="entry name" value="Pro-tRNA-synth_IIa_bac-type"/>
</dbReference>
<dbReference type="InterPro" id="IPR023717">
    <property type="entry name" value="Pro-tRNA-Synthase_IIa_type1"/>
</dbReference>
<dbReference type="InterPro" id="IPR050062">
    <property type="entry name" value="Pro-tRNA_synthetase"/>
</dbReference>
<dbReference type="InterPro" id="IPR044140">
    <property type="entry name" value="ProRS_anticodon_short"/>
</dbReference>
<dbReference type="InterPro" id="IPR033730">
    <property type="entry name" value="ProRS_core_prok"/>
</dbReference>
<dbReference type="InterPro" id="IPR036754">
    <property type="entry name" value="YbaK/aa-tRNA-synt-asso_dom_sf"/>
</dbReference>
<dbReference type="InterPro" id="IPR007214">
    <property type="entry name" value="YbaK/aa-tRNA-synth-assoc-dom"/>
</dbReference>
<dbReference type="NCBIfam" id="NF006625">
    <property type="entry name" value="PRK09194.1"/>
    <property type="match status" value="1"/>
</dbReference>
<dbReference type="NCBIfam" id="TIGR00409">
    <property type="entry name" value="proS_fam_II"/>
    <property type="match status" value="1"/>
</dbReference>
<dbReference type="PANTHER" id="PTHR42753">
    <property type="entry name" value="MITOCHONDRIAL RIBOSOME PROTEIN L39/PROLYL-TRNA LIGASE FAMILY MEMBER"/>
    <property type="match status" value="1"/>
</dbReference>
<dbReference type="PANTHER" id="PTHR42753:SF2">
    <property type="entry name" value="PROLINE--TRNA LIGASE"/>
    <property type="match status" value="1"/>
</dbReference>
<dbReference type="Pfam" id="PF03129">
    <property type="entry name" value="HGTP_anticodon"/>
    <property type="match status" value="1"/>
</dbReference>
<dbReference type="Pfam" id="PF00587">
    <property type="entry name" value="tRNA-synt_2b"/>
    <property type="match status" value="1"/>
</dbReference>
<dbReference type="Pfam" id="PF04073">
    <property type="entry name" value="tRNA_edit"/>
    <property type="match status" value="1"/>
</dbReference>
<dbReference type="PIRSF" id="PIRSF001535">
    <property type="entry name" value="ProRS_1"/>
    <property type="match status" value="1"/>
</dbReference>
<dbReference type="PRINTS" id="PR01046">
    <property type="entry name" value="TRNASYNTHPRO"/>
</dbReference>
<dbReference type="SUPFAM" id="SSF52954">
    <property type="entry name" value="Class II aaRS ABD-related"/>
    <property type="match status" value="1"/>
</dbReference>
<dbReference type="SUPFAM" id="SSF55681">
    <property type="entry name" value="Class II aaRS and biotin synthetases"/>
    <property type="match status" value="1"/>
</dbReference>
<dbReference type="SUPFAM" id="SSF55826">
    <property type="entry name" value="YbaK/ProRS associated domain"/>
    <property type="match status" value="1"/>
</dbReference>
<dbReference type="PROSITE" id="PS50862">
    <property type="entry name" value="AA_TRNA_LIGASE_II"/>
    <property type="match status" value="1"/>
</dbReference>
<gene>
    <name evidence="1" type="primary">proS</name>
    <name type="ordered locus">Mlg_0539</name>
</gene>